<accession>A8GNC3</accession>
<gene>
    <name evidence="1" type="primary">lspA</name>
    <name type="ordered locus">A1C_03040</name>
</gene>
<feature type="chain" id="PRO_1000038818" description="Lipoprotein signal peptidase">
    <location>
        <begin position="1"/>
        <end position="196"/>
    </location>
</feature>
<feature type="transmembrane region" description="Helical" evidence="1">
    <location>
        <begin position="17"/>
        <end position="37"/>
    </location>
</feature>
<feature type="transmembrane region" description="Helical" evidence="1">
    <location>
        <begin position="73"/>
        <end position="93"/>
    </location>
</feature>
<feature type="transmembrane region" description="Helical" evidence="1">
    <location>
        <begin position="96"/>
        <end position="116"/>
    </location>
</feature>
<feature type="transmembrane region" description="Helical" evidence="1">
    <location>
        <begin position="135"/>
        <end position="155"/>
    </location>
</feature>
<feature type="active site" evidence="1">
    <location>
        <position position="126"/>
    </location>
</feature>
<feature type="active site" evidence="1">
    <location>
        <position position="144"/>
    </location>
</feature>
<reference key="1">
    <citation type="submission" date="2007-09" db="EMBL/GenBank/DDBJ databases">
        <title>Complete genome sequence of Rickettsia akari.</title>
        <authorList>
            <person name="Madan A."/>
            <person name="Fahey J."/>
            <person name="Helton E."/>
            <person name="Ketteman M."/>
            <person name="Madan A."/>
            <person name="Rodrigues S."/>
            <person name="Sanchez A."/>
            <person name="Whiting M."/>
            <person name="Dasch G."/>
            <person name="Eremeeva M."/>
        </authorList>
    </citation>
    <scope>NUCLEOTIDE SEQUENCE [LARGE SCALE GENOMIC DNA]</scope>
    <source>
        <strain>Hartford</strain>
    </source>
</reference>
<comment type="function">
    <text evidence="1">This protein specifically catalyzes the removal of signal peptides from prolipoproteins.</text>
</comment>
<comment type="catalytic activity">
    <reaction evidence="1">
        <text>Release of signal peptides from bacterial membrane prolipoproteins. Hydrolyzes -Xaa-Yaa-Zaa-|-(S,diacylglyceryl)Cys-, in which Xaa is hydrophobic (preferably Leu), and Yaa (Ala or Ser) and Zaa (Gly or Ala) have small, neutral side chains.</text>
        <dbReference type="EC" id="3.4.23.36"/>
    </reaction>
</comment>
<comment type="pathway">
    <text evidence="1">Protein modification; lipoprotein biosynthesis (signal peptide cleavage).</text>
</comment>
<comment type="subcellular location">
    <subcellularLocation>
        <location evidence="1">Cell inner membrane</location>
        <topology evidence="1">Multi-pass membrane protein</topology>
    </subcellularLocation>
</comment>
<comment type="similarity">
    <text evidence="1">Belongs to the peptidase A8 family.</text>
</comment>
<sequence length="196" mass="22746">MCLLIKKLYLTFARSTSIIITLVIIDQLSKWWFIDNLRWTPGLMLKVTSFLNMVYTWNYGISFGLMREYYQYSNAIFLITNTLIVCYLYYLMIRSNTIGSFAGYSFVIGGAVGNLIDRCFRGAVFDFIHFHYHNYSFPVFNLADCFITIGVIILIEDYDNTKKVIEEKIKGNYDNAQIEAMAEKIRNTDQGGNDKV</sequence>
<organism>
    <name type="scientific">Rickettsia akari (strain Hartford)</name>
    <dbReference type="NCBI Taxonomy" id="293614"/>
    <lineage>
        <taxon>Bacteria</taxon>
        <taxon>Pseudomonadati</taxon>
        <taxon>Pseudomonadota</taxon>
        <taxon>Alphaproteobacteria</taxon>
        <taxon>Rickettsiales</taxon>
        <taxon>Rickettsiaceae</taxon>
        <taxon>Rickettsieae</taxon>
        <taxon>Rickettsia</taxon>
        <taxon>spotted fever group</taxon>
    </lineage>
</organism>
<dbReference type="EC" id="3.4.23.36" evidence="1"/>
<dbReference type="EMBL" id="CP000847">
    <property type="protein sequence ID" value="ABV74898.1"/>
    <property type="molecule type" value="Genomic_DNA"/>
</dbReference>
<dbReference type="RefSeq" id="WP_012149531.1">
    <property type="nucleotide sequence ID" value="NC_009881.1"/>
</dbReference>
<dbReference type="SMR" id="A8GNC3"/>
<dbReference type="STRING" id="293614.A1C_03040"/>
<dbReference type="KEGG" id="rak:A1C_03040"/>
<dbReference type="eggNOG" id="COG0597">
    <property type="taxonomic scope" value="Bacteria"/>
</dbReference>
<dbReference type="HOGENOM" id="CLU_083252_4_3_5"/>
<dbReference type="UniPathway" id="UPA00665"/>
<dbReference type="Proteomes" id="UP000006830">
    <property type="component" value="Chromosome"/>
</dbReference>
<dbReference type="GO" id="GO:0005886">
    <property type="term" value="C:plasma membrane"/>
    <property type="evidence" value="ECO:0007669"/>
    <property type="project" value="UniProtKB-SubCell"/>
</dbReference>
<dbReference type="GO" id="GO:0004190">
    <property type="term" value="F:aspartic-type endopeptidase activity"/>
    <property type="evidence" value="ECO:0007669"/>
    <property type="project" value="UniProtKB-UniRule"/>
</dbReference>
<dbReference type="GO" id="GO:0006508">
    <property type="term" value="P:proteolysis"/>
    <property type="evidence" value="ECO:0007669"/>
    <property type="project" value="UniProtKB-KW"/>
</dbReference>
<dbReference type="HAMAP" id="MF_00161">
    <property type="entry name" value="LspA"/>
    <property type="match status" value="1"/>
</dbReference>
<dbReference type="InterPro" id="IPR001872">
    <property type="entry name" value="Peptidase_A8"/>
</dbReference>
<dbReference type="NCBIfam" id="TIGR00077">
    <property type="entry name" value="lspA"/>
    <property type="match status" value="1"/>
</dbReference>
<dbReference type="PANTHER" id="PTHR33695">
    <property type="entry name" value="LIPOPROTEIN SIGNAL PEPTIDASE"/>
    <property type="match status" value="1"/>
</dbReference>
<dbReference type="PANTHER" id="PTHR33695:SF1">
    <property type="entry name" value="LIPOPROTEIN SIGNAL PEPTIDASE"/>
    <property type="match status" value="1"/>
</dbReference>
<dbReference type="Pfam" id="PF01252">
    <property type="entry name" value="Peptidase_A8"/>
    <property type="match status" value="1"/>
</dbReference>
<dbReference type="PRINTS" id="PR00781">
    <property type="entry name" value="LIPOSIGPTASE"/>
</dbReference>
<dbReference type="PROSITE" id="PS00855">
    <property type="entry name" value="SPASE_II"/>
    <property type="match status" value="1"/>
</dbReference>
<protein>
    <recommendedName>
        <fullName evidence="1">Lipoprotein signal peptidase</fullName>
        <ecNumber evidence="1">3.4.23.36</ecNumber>
    </recommendedName>
    <alternativeName>
        <fullName evidence="1">Prolipoprotein signal peptidase</fullName>
    </alternativeName>
    <alternativeName>
        <fullName evidence="1">Signal peptidase II</fullName>
        <shortName evidence="1">SPase II</shortName>
    </alternativeName>
</protein>
<name>LSPA_RICAH</name>
<proteinExistence type="inferred from homology"/>
<evidence type="ECO:0000255" key="1">
    <source>
        <dbReference type="HAMAP-Rule" id="MF_00161"/>
    </source>
</evidence>
<keyword id="KW-0064">Aspartyl protease</keyword>
<keyword id="KW-0997">Cell inner membrane</keyword>
<keyword id="KW-1003">Cell membrane</keyword>
<keyword id="KW-0378">Hydrolase</keyword>
<keyword id="KW-0472">Membrane</keyword>
<keyword id="KW-0645">Protease</keyword>
<keyword id="KW-0812">Transmembrane</keyword>
<keyword id="KW-1133">Transmembrane helix</keyword>